<accession>P38574</accession>
<evidence type="ECO:0000255" key="1"/>
<evidence type="ECO:0000256" key="2">
    <source>
        <dbReference type="SAM" id="MobiDB-lite"/>
    </source>
</evidence>
<evidence type="ECO:0000269" key="3">
    <source>
    </source>
</evidence>
<evidence type="ECO:0000269" key="4">
    <source>
    </source>
</evidence>
<evidence type="ECO:0000305" key="5"/>
<feature type="signal peptide" evidence="4">
    <location>
        <begin position="1"/>
        <end position="18"/>
    </location>
</feature>
<feature type="chain" id="PRO_0000022636" description="Uroplakin-3a">
    <location>
        <begin position="19"/>
        <end position="287"/>
    </location>
</feature>
<feature type="topological domain" description="Lumenal" evidence="1">
    <location>
        <begin position="19"/>
        <end position="207"/>
    </location>
</feature>
<feature type="transmembrane region" description="Helical" evidence="1">
    <location>
        <begin position="208"/>
        <end position="235"/>
    </location>
</feature>
<feature type="topological domain" description="Cytoplasmic" evidence="1">
    <location>
        <begin position="236"/>
        <end position="287"/>
    </location>
</feature>
<feature type="region of interest" description="Disordered" evidence="2">
    <location>
        <begin position="243"/>
        <end position="274"/>
    </location>
</feature>
<feature type="compositionally biased region" description="Polar residues" evidence="2">
    <location>
        <begin position="259"/>
        <end position="271"/>
    </location>
</feature>
<feature type="glycosylation site" description="N-linked (GlcNAc...) asparagine" evidence="1">
    <location>
        <position position="74"/>
    </location>
</feature>
<feature type="glycosylation site" description="N-linked (GlcNAc...) asparagine" evidence="1">
    <location>
        <position position="139"/>
    </location>
</feature>
<feature type="glycosylation site" description="N-linked (GlcNAc...) asparagine" evidence="1">
    <location>
        <position position="170"/>
    </location>
</feature>
<keyword id="KW-0903">Direct protein sequencing</keyword>
<keyword id="KW-0256">Endoplasmic reticulum</keyword>
<keyword id="KW-0325">Glycoprotein</keyword>
<keyword id="KW-0472">Membrane</keyword>
<keyword id="KW-1185">Reference proteome</keyword>
<keyword id="KW-0732">Signal</keyword>
<keyword id="KW-0812">Transmembrane</keyword>
<keyword id="KW-1133">Transmembrane helix</keyword>
<comment type="function">
    <text>Component of the asymmetric unit membrane (AUM); a highly specialized biomembrane elaborated by terminally differentiated urothelial cells. May play an important role in AUM-cytoskeleton interaction in terminally differentiated urothelial cells. It also contributes to the formation of urothelial glycocalyx which may play an important role in preventing bacterial adherence.</text>
</comment>
<comment type="subunit">
    <text>Heterodimer with uroplakin-1B (UPK1B).</text>
</comment>
<comment type="subcellular location">
    <subcellularLocation>
        <location evidence="3">Endoplasmic reticulum membrane</location>
        <topology evidence="3">Single-pass type I membrane protein</topology>
    </subcellularLocation>
    <text>Heterodimer formation with UPK1B is a prerequisite to exit out of the endoplasmic reticulum (ER).</text>
</comment>
<comment type="tissue specificity">
    <text>Bladder epithelium.</text>
</comment>
<comment type="similarity">
    <text evidence="5">Belongs to the uroplakin-3 family.</text>
</comment>
<gene>
    <name type="primary">UPK3A</name>
    <name type="synonym">UPK3</name>
</gene>
<organism>
    <name type="scientific">Bos taurus</name>
    <name type="common">Bovine</name>
    <dbReference type="NCBI Taxonomy" id="9913"/>
    <lineage>
        <taxon>Eukaryota</taxon>
        <taxon>Metazoa</taxon>
        <taxon>Chordata</taxon>
        <taxon>Craniata</taxon>
        <taxon>Vertebrata</taxon>
        <taxon>Euteleostomi</taxon>
        <taxon>Mammalia</taxon>
        <taxon>Eutheria</taxon>
        <taxon>Laurasiatheria</taxon>
        <taxon>Artiodactyla</taxon>
        <taxon>Ruminantia</taxon>
        <taxon>Pecora</taxon>
        <taxon>Bovidae</taxon>
        <taxon>Bovinae</taxon>
        <taxon>Bos</taxon>
    </lineage>
</organism>
<dbReference type="EMBL" id="L19542">
    <property type="protein sequence ID" value="AAC37309.1"/>
    <property type="molecule type" value="mRNA"/>
</dbReference>
<dbReference type="PIR" id="I45986">
    <property type="entry name" value="I45986"/>
</dbReference>
<dbReference type="RefSeq" id="NP_777134.1">
    <property type="nucleotide sequence ID" value="NM_174709.3"/>
</dbReference>
<dbReference type="SMR" id="P38574"/>
<dbReference type="FunCoup" id="P38574">
    <property type="interactions" value="16"/>
</dbReference>
<dbReference type="STRING" id="9913.ENSBTAP00000013081"/>
<dbReference type="GlyCosmos" id="P38574">
    <property type="glycosylation" value="3 sites, No reported glycans"/>
</dbReference>
<dbReference type="GlyGen" id="P38574">
    <property type="glycosylation" value="3 sites"/>
</dbReference>
<dbReference type="PaxDb" id="9913-ENSBTAP00000013081"/>
<dbReference type="Ensembl" id="ENSBTAT00000013081.7">
    <property type="protein sequence ID" value="ENSBTAP00000013081.5"/>
    <property type="gene ID" value="ENSBTAG00000009913.7"/>
</dbReference>
<dbReference type="GeneID" id="100336102"/>
<dbReference type="KEGG" id="bta:100336102"/>
<dbReference type="CTD" id="7380"/>
<dbReference type="VEuPathDB" id="HostDB:ENSBTAG00000009913"/>
<dbReference type="VGNC" id="VGNC:36687">
    <property type="gene designation" value="UPK3A"/>
</dbReference>
<dbReference type="eggNOG" id="ENOG502S14V">
    <property type="taxonomic scope" value="Eukaryota"/>
</dbReference>
<dbReference type="GeneTree" id="ENSGT00940000153392"/>
<dbReference type="HOGENOM" id="CLU_082608_1_0_1"/>
<dbReference type="InParanoid" id="P38574"/>
<dbReference type="OMA" id="EKPFCVF"/>
<dbReference type="OrthoDB" id="9945328at2759"/>
<dbReference type="TreeFam" id="TF336628"/>
<dbReference type="Proteomes" id="UP000009136">
    <property type="component" value="Chromosome 5"/>
</dbReference>
<dbReference type="Bgee" id="ENSBTAG00000009913">
    <property type="expression patterns" value="Expressed in urethra and 15 other cell types or tissues"/>
</dbReference>
<dbReference type="GO" id="GO:0120001">
    <property type="term" value="C:apical plasma membrane urothelial plaque"/>
    <property type="evidence" value="ECO:0000314"/>
    <property type="project" value="UniProtKB"/>
</dbReference>
<dbReference type="GO" id="GO:0005783">
    <property type="term" value="C:endoplasmic reticulum"/>
    <property type="evidence" value="ECO:0000314"/>
    <property type="project" value="UniProtKB"/>
</dbReference>
<dbReference type="GO" id="GO:0005789">
    <property type="term" value="C:endoplasmic reticulum membrane"/>
    <property type="evidence" value="ECO:0007669"/>
    <property type="project" value="UniProtKB-SubCell"/>
</dbReference>
<dbReference type="GO" id="GO:0016020">
    <property type="term" value="C:membrane"/>
    <property type="evidence" value="ECO:0000314"/>
    <property type="project" value="UniProtKB"/>
</dbReference>
<dbReference type="GO" id="GO:0005886">
    <property type="term" value="C:plasma membrane"/>
    <property type="evidence" value="ECO:0000314"/>
    <property type="project" value="UniProtKB"/>
</dbReference>
<dbReference type="GO" id="GO:0032991">
    <property type="term" value="C:protein-containing complex"/>
    <property type="evidence" value="ECO:0000314"/>
    <property type="project" value="UniProtKB"/>
</dbReference>
<dbReference type="GO" id="GO:0005198">
    <property type="term" value="F:structural molecule activity"/>
    <property type="evidence" value="ECO:0000314"/>
    <property type="project" value="UniProtKB"/>
</dbReference>
<dbReference type="GO" id="GO:0000902">
    <property type="term" value="P:cell morphogenesis"/>
    <property type="evidence" value="ECO:0007669"/>
    <property type="project" value="Ensembl"/>
</dbReference>
<dbReference type="GO" id="GO:0030855">
    <property type="term" value="P:epithelial cell differentiation"/>
    <property type="evidence" value="ECO:0007669"/>
    <property type="project" value="Ensembl"/>
</dbReference>
<dbReference type="GO" id="GO:0001822">
    <property type="term" value="P:kidney development"/>
    <property type="evidence" value="ECO:0007669"/>
    <property type="project" value="Ensembl"/>
</dbReference>
<dbReference type="GO" id="GO:0055075">
    <property type="term" value="P:potassium ion homeostasis"/>
    <property type="evidence" value="ECO:0007669"/>
    <property type="project" value="Ensembl"/>
</dbReference>
<dbReference type="GO" id="GO:0055078">
    <property type="term" value="P:sodium ion homeostasis"/>
    <property type="evidence" value="ECO:0007669"/>
    <property type="project" value="Ensembl"/>
</dbReference>
<dbReference type="GO" id="GO:0015840">
    <property type="term" value="P:urea transport"/>
    <property type="evidence" value="ECO:0000318"/>
    <property type="project" value="GO_Central"/>
</dbReference>
<dbReference type="GO" id="GO:0060157">
    <property type="term" value="P:urinary bladder development"/>
    <property type="evidence" value="ECO:0007669"/>
    <property type="project" value="Ensembl"/>
</dbReference>
<dbReference type="GO" id="GO:0006833">
    <property type="term" value="P:water transport"/>
    <property type="evidence" value="ECO:0000318"/>
    <property type="project" value="GO_Central"/>
</dbReference>
<dbReference type="CDD" id="cd09970">
    <property type="entry name" value="UP_IIIa"/>
    <property type="match status" value="1"/>
</dbReference>
<dbReference type="InterPro" id="IPR024831">
    <property type="entry name" value="Uroplakin-3"/>
</dbReference>
<dbReference type="InterPro" id="IPR024825">
    <property type="entry name" value="Uroplakin-3a"/>
</dbReference>
<dbReference type="PANTHER" id="PTHR15446">
    <property type="entry name" value="UROPLAKIN III"/>
    <property type="match status" value="1"/>
</dbReference>
<dbReference type="PANTHER" id="PTHR15446:SF17">
    <property type="entry name" value="UROPLAKIN-3A"/>
    <property type="match status" value="1"/>
</dbReference>
<protein>
    <recommendedName>
        <fullName>Uroplakin-3a</fullName>
        <shortName>UP3a</shortName>
    </recommendedName>
    <alternativeName>
        <fullName>Uroplakin III</fullName>
        <shortName>UPIII</shortName>
    </alternativeName>
</protein>
<proteinExistence type="evidence at protein level"/>
<name>UPK3A_BOVIN</name>
<sequence>MPPLWVVLALGCLRLGSGVNLQPQLASVTFATNNPTLTTVALEKPLCMFDSSAALHGTYEVYLYVLVDSASFRNASVQDSTKTPLSSTFQQTQGGRTGPYKAAAFDLTPCSDSPSLDAVRDVSRASEILNAYLIRVGTNGTCLLDPNFQGLCNPPLSAATEYRFKYVLVNMSSGLVQDQTLWSDPIRTDRLTLYSAIDTWPGRRSGGMIVITSILGSLPFFLLIGFAGAIVLSLVDRGDADGATSHDSQITQEAVPKSLGTSEPSYTSVNRGPSLDRAEVYASKLQD</sequence>
<reference key="1">
    <citation type="journal article" date="1993" name="J. Cell Sci.">
        <title>Molecular cloning of a 47 kDa tissue-specific and differentiation-dependent urothelial cell surface glycoprotein.</title>
        <authorList>
            <person name="Wu X.-R."/>
            <person name="Sun T.-T."/>
        </authorList>
    </citation>
    <scope>NUCLEOTIDE SEQUENCE [MRNA]</scope>
    <scope>PROTEIN SEQUENCE OF 19-45; 174-181 AND 209-235</scope>
    <source>
        <tissue>Urinary bladder urothelium</tissue>
    </source>
</reference>
<reference key="2">
    <citation type="journal article" date="2002" name="Mol. Biol. Cell">
        <title>Specific heterodimer formation is a prerequisite for uroplakins to exit from the endoplasmic reticulum.</title>
        <authorList>
            <person name="Tu L."/>
            <person name="Sun T.-T."/>
            <person name="Kreibich G."/>
        </authorList>
    </citation>
    <scope>INTERACTION WITH UPK1B</scope>
    <scope>SUBCELLULAR LOCATION</scope>
</reference>